<reference key="1">
    <citation type="journal article" date="1996" name="J. Biol. Chem.">
        <title>A new syntaxin family member implicated in targeting of intracellular transport vesicles.</title>
        <authorList>
            <person name="Bock J.B."/>
            <person name="Lin R.C."/>
            <person name="Scheller R.H."/>
        </authorList>
    </citation>
    <scope>NUCLEOTIDE SEQUENCE [MRNA]</scope>
</reference>
<reference key="2">
    <citation type="journal article" date="2004" name="Genome Res.">
        <title>The status, quality, and expansion of the NIH full-length cDNA project: the Mammalian Gene Collection (MGC).</title>
        <authorList>
            <consortium name="The MGC Project Team"/>
        </authorList>
    </citation>
    <scope>NUCLEOTIDE SEQUENCE [LARGE SCALE MRNA]</scope>
    <source>
        <tissue>Testis</tissue>
    </source>
</reference>
<reference key="3">
    <citation type="journal article" date="1999" name="J. Biol. Chem.">
        <title>The Rab5 effector EEA1 interacts directly with syntaxin-6.</title>
        <authorList>
            <person name="Simonsen A."/>
            <person name="Gaullier J.-M."/>
            <person name="D'Arrigo A."/>
            <person name="Stenmark H."/>
        </authorList>
    </citation>
    <scope>INTERACTION WITH EEA1</scope>
</reference>
<reference key="4">
    <citation type="journal article" date="2005" name="Mol. Biol. Cell">
        <title>MARCH-II is a syntaxin-6-binding protein involved in endosomal trafficking.</title>
        <authorList>
            <person name="Nakamura N."/>
            <person name="Fukuda H."/>
            <person name="Kato A."/>
            <person name="Hirose S."/>
        </authorList>
    </citation>
    <scope>INTERACTION WITH MARCHF2</scope>
</reference>
<reference key="5">
    <citation type="journal article" date="2006" name="J. Biochem.">
        <title>MARCH-III is a novel component of endosomes with properties similar to those of MARCH-II.</title>
        <authorList>
            <person name="Fukuda H."/>
            <person name="Nakamura N."/>
            <person name="Hirose S."/>
        </authorList>
    </citation>
    <scope>INTERACTION WITH MARCHF3</scope>
</reference>
<reference key="6">
    <citation type="journal article" date="2010" name="Traffic">
        <title>A novel syntaxin 6-interacting protein, SHIP164, regulates syntaxin 6-dependent sorting from early endosomes.</title>
        <authorList>
            <person name="Otto G.P."/>
            <person name="Razi M."/>
            <person name="Morvan J."/>
            <person name="Stenner F."/>
            <person name="Tooze S.A."/>
        </authorList>
    </citation>
    <scope>INTERACTION WITH BLTP3B</scope>
</reference>
<reference key="7">
    <citation type="journal article" date="2012" name="Nat. Commun.">
        <title>Quantitative maps of protein phosphorylation sites across 14 different rat organs and tissues.</title>
        <authorList>
            <person name="Lundby A."/>
            <person name="Secher A."/>
            <person name="Lage K."/>
            <person name="Nordsborg N.B."/>
            <person name="Dmytriyev A."/>
            <person name="Lundby C."/>
            <person name="Olsen J.V."/>
        </authorList>
    </citation>
    <scope>PHOSPHORYLATION [LARGE SCALE ANALYSIS] AT SER-2</scope>
    <scope>IDENTIFICATION BY MASS SPECTROMETRY [LARGE SCALE ANALYSIS]</scope>
</reference>
<reference key="8">
    <citation type="journal article" date="2019" name="Nat. Commun.">
        <title>SNAREs define targeting specificity of trafficking vesicles by combinatorial interaction with tethering factors.</title>
        <authorList>
            <person name="Koike S."/>
            <person name="Jahn R."/>
        </authorList>
    </citation>
    <scope>FUNCTION</scope>
    <scope>INTERACTION WITH VPS13B AND VPS51</scope>
    <scope>SUBCELLULAR LOCATION</scope>
</reference>
<reference key="9">
    <citation type="journal article" date="2002" name="Proc. Natl. Acad. Sci. U.S.A.">
        <title>Three-dimensional structure of the amino-terminal domain of syntaxin 6, a SNAP-25 C homolog.</title>
        <authorList>
            <person name="Misura K.M."/>
            <person name="Bock J.B."/>
            <person name="Gonzalez L.C. Jr."/>
            <person name="Scheller R.H."/>
            <person name="Weis W.I."/>
        </authorList>
    </citation>
    <scope>X-RAY CRYSTALLOGRAPHY (2.1 ANGSTROMS) OF 1-110</scope>
</reference>
<protein>
    <recommendedName>
        <fullName>Syntaxin-6</fullName>
    </recommendedName>
</protein>
<proteinExistence type="evidence at protein level"/>
<name>STX6_RAT</name>
<gene>
    <name type="primary">Stx6</name>
</gene>
<keyword id="KW-0002">3D-structure</keyword>
<keyword id="KW-0007">Acetylation</keyword>
<keyword id="KW-0175">Coiled coil</keyword>
<keyword id="KW-0967">Endosome</keyword>
<keyword id="KW-0333">Golgi apparatus</keyword>
<keyword id="KW-0472">Membrane</keyword>
<keyword id="KW-0597">Phosphoprotein</keyword>
<keyword id="KW-0653">Protein transport</keyword>
<keyword id="KW-1185">Reference proteome</keyword>
<keyword id="KW-0812">Transmembrane</keyword>
<keyword id="KW-1133">Transmembrane helix</keyword>
<keyword id="KW-0813">Transport</keyword>
<sequence length="255" mass="29057">MSMEDPFFVVKGEVQKAVNTAQGLFQRWTELLQGPSAATREEIDWTTNELRNNLRSIEWDLEDLDETISIVEANPRKFNLDATELSIRKAFITSTRQIVRDMKDQMSASSVQALAERKNRQALLGDSSSQNWDAGVTDRYGRLDRELQLANSHFIEEQQAQQQLIVEQQDEQLELVSGSIGVLKNMSQRIGGELEEQAVMLDDFSHELESTQSRLDNVMKKLAKVSHMTSDRRQWCAIAILFAVLLVVLTLFLVL</sequence>
<dbReference type="EMBL" id="U56815">
    <property type="protein sequence ID" value="AAC52709.1"/>
    <property type="molecule type" value="mRNA"/>
</dbReference>
<dbReference type="EMBL" id="BC081769">
    <property type="protein sequence ID" value="AAH81769.1"/>
    <property type="molecule type" value="mRNA"/>
</dbReference>
<dbReference type="RefSeq" id="NP_113853.1">
    <property type="nucleotide sequence ID" value="NM_031665.2"/>
</dbReference>
<dbReference type="PDB" id="1LVF">
    <property type="method" value="X-ray"/>
    <property type="resolution" value="2.10 A"/>
    <property type="chains" value="A/B=1-110"/>
</dbReference>
<dbReference type="PDBsum" id="1LVF"/>
<dbReference type="SMR" id="Q63635"/>
<dbReference type="BioGRID" id="248852">
    <property type="interactions" value="3"/>
</dbReference>
<dbReference type="CORUM" id="Q63635"/>
<dbReference type="FunCoup" id="Q63635">
    <property type="interactions" value="3335"/>
</dbReference>
<dbReference type="IntAct" id="Q63635">
    <property type="interactions" value="10"/>
</dbReference>
<dbReference type="MINT" id="Q63635"/>
<dbReference type="STRING" id="10116.ENSRNOP00000037536"/>
<dbReference type="iPTMnet" id="Q63635"/>
<dbReference type="PhosphoSitePlus" id="Q63635"/>
<dbReference type="SwissPalm" id="Q63635"/>
<dbReference type="jPOST" id="Q63635"/>
<dbReference type="PaxDb" id="10116-ENSRNOP00000037536"/>
<dbReference type="Ensembl" id="ENSRNOT00000099649.1">
    <property type="protein sequence ID" value="ENSRNOP00000080858.1"/>
    <property type="gene ID" value="ENSRNOG00000003402.8"/>
</dbReference>
<dbReference type="GeneID" id="60562"/>
<dbReference type="KEGG" id="rno:60562"/>
<dbReference type="AGR" id="RGD:61915"/>
<dbReference type="CTD" id="10228"/>
<dbReference type="RGD" id="61915">
    <property type="gene designation" value="Stx6"/>
</dbReference>
<dbReference type="eggNOG" id="KOG3202">
    <property type="taxonomic scope" value="Eukaryota"/>
</dbReference>
<dbReference type="GeneTree" id="ENSGT00940000157639"/>
<dbReference type="HOGENOM" id="CLU_061883_1_0_1"/>
<dbReference type="InParanoid" id="Q63635"/>
<dbReference type="OMA" id="EHDPYRF"/>
<dbReference type="OrthoDB" id="66077at9989"/>
<dbReference type="PhylomeDB" id="Q63635"/>
<dbReference type="TreeFam" id="TF313254"/>
<dbReference type="Reactome" id="R-RNO-6811438">
    <property type="pathway name" value="Intra-Golgi traffic"/>
</dbReference>
<dbReference type="Reactome" id="R-RNO-6811440">
    <property type="pathway name" value="Retrograde transport at the Trans-Golgi-Network"/>
</dbReference>
<dbReference type="EvolutionaryTrace" id="Q63635"/>
<dbReference type="PRO" id="PR:Q63635"/>
<dbReference type="Proteomes" id="UP000002494">
    <property type="component" value="Chromosome 13"/>
</dbReference>
<dbReference type="Bgee" id="ENSRNOG00000003402">
    <property type="expression patterns" value="Expressed in Ammon's horn and 19 other cell types or tissues"/>
</dbReference>
<dbReference type="GO" id="GO:0005829">
    <property type="term" value="C:cytosol"/>
    <property type="evidence" value="ECO:0007669"/>
    <property type="project" value="Ensembl"/>
</dbReference>
<dbReference type="GO" id="GO:0005769">
    <property type="term" value="C:early endosome"/>
    <property type="evidence" value="ECO:0000266"/>
    <property type="project" value="RGD"/>
</dbReference>
<dbReference type="GO" id="GO:0012505">
    <property type="term" value="C:endomembrane system"/>
    <property type="evidence" value="ECO:0000318"/>
    <property type="project" value="GO_Central"/>
</dbReference>
<dbReference type="GO" id="GO:0005794">
    <property type="term" value="C:Golgi apparatus"/>
    <property type="evidence" value="ECO:0000266"/>
    <property type="project" value="RGD"/>
</dbReference>
<dbReference type="GO" id="GO:0000139">
    <property type="term" value="C:Golgi membrane"/>
    <property type="evidence" value="ECO:0007669"/>
    <property type="project" value="UniProtKB-SubCell"/>
</dbReference>
<dbReference type="GO" id="GO:0016020">
    <property type="term" value="C:membrane"/>
    <property type="evidence" value="ECO:0000266"/>
    <property type="project" value="RGD"/>
</dbReference>
<dbReference type="GO" id="GO:0005654">
    <property type="term" value="C:nucleoplasm"/>
    <property type="evidence" value="ECO:0007669"/>
    <property type="project" value="Ensembl"/>
</dbReference>
<dbReference type="GO" id="GO:0048471">
    <property type="term" value="C:perinuclear region of cytoplasm"/>
    <property type="evidence" value="ECO:0000266"/>
    <property type="project" value="RGD"/>
</dbReference>
<dbReference type="GO" id="GO:0045335">
    <property type="term" value="C:phagocytic vesicle"/>
    <property type="evidence" value="ECO:0000266"/>
    <property type="project" value="RGD"/>
</dbReference>
<dbReference type="GO" id="GO:0055037">
    <property type="term" value="C:recycling endosome"/>
    <property type="evidence" value="ECO:0000314"/>
    <property type="project" value="UniProtKB"/>
</dbReference>
<dbReference type="GO" id="GO:0055038">
    <property type="term" value="C:recycling endosome membrane"/>
    <property type="evidence" value="ECO:0007669"/>
    <property type="project" value="UniProtKB-SubCell"/>
</dbReference>
<dbReference type="GO" id="GO:0031201">
    <property type="term" value="C:SNARE complex"/>
    <property type="evidence" value="ECO:0000266"/>
    <property type="project" value="RGD"/>
</dbReference>
<dbReference type="GO" id="GO:0030672">
    <property type="term" value="C:synaptic vesicle membrane"/>
    <property type="evidence" value="ECO:0000314"/>
    <property type="project" value="SynGO"/>
</dbReference>
<dbReference type="GO" id="GO:0043195">
    <property type="term" value="C:terminal bouton"/>
    <property type="evidence" value="ECO:0007005"/>
    <property type="project" value="ParkinsonsUK-UCL"/>
</dbReference>
<dbReference type="GO" id="GO:0005802">
    <property type="term" value="C:trans-Golgi network"/>
    <property type="evidence" value="ECO:0000266"/>
    <property type="project" value="RGD"/>
</dbReference>
<dbReference type="GO" id="GO:0032588">
    <property type="term" value="C:trans-Golgi network membrane"/>
    <property type="evidence" value="ECO:0000314"/>
    <property type="project" value="UniProtKB"/>
</dbReference>
<dbReference type="GO" id="GO:0005484">
    <property type="term" value="F:SNAP receptor activity"/>
    <property type="evidence" value="ECO:0000318"/>
    <property type="project" value="GO_Central"/>
</dbReference>
<dbReference type="GO" id="GO:0000149">
    <property type="term" value="F:SNARE binding"/>
    <property type="evidence" value="ECO:0000318"/>
    <property type="project" value="GO_Central"/>
</dbReference>
<dbReference type="GO" id="GO:0019905">
    <property type="term" value="F:syntaxin binding"/>
    <property type="evidence" value="ECO:0000266"/>
    <property type="project" value="RGD"/>
</dbReference>
<dbReference type="GO" id="GO:0032456">
    <property type="term" value="P:endocytic recycling"/>
    <property type="evidence" value="ECO:0000314"/>
    <property type="project" value="UniProtKB"/>
</dbReference>
<dbReference type="GO" id="GO:0007032">
    <property type="term" value="P:endosome organization"/>
    <property type="evidence" value="ECO:0000266"/>
    <property type="project" value="RGD"/>
</dbReference>
<dbReference type="GO" id="GO:0048193">
    <property type="term" value="P:Golgi vesicle transport"/>
    <property type="evidence" value="ECO:0007669"/>
    <property type="project" value="InterPro"/>
</dbReference>
<dbReference type="GO" id="GO:0006886">
    <property type="term" value="P:intracellular protein transport"/>
    <property type="evidence" value="ECO:0000318"/>
    <property type="project" value="GO_Central"/>
</dbReference>
<dbReference type="GO" id="GO:0032880">
    <property type="term" value="P:regulation of protein localization"/>
    <property type="evidence" value="ECO:0000266"/>
    <property type="project" value="RGD"/>
</dbReference>
<dbReference type="GO" id="GO:0042147">
    <property type="term" value="P:retrograde transport, endosome to Golgi"/>
    <property type="evidence" value="ECO:0000314"/>
    <property type="project" value="UniProtKB"/>
</dbReference>
<dbReference type="GO" id="GO:0016189">
    <property type="term" value="P:synaptic vesicle to endosome fusion"/>
    <property type="evidence" value="ECO:0000314"/>
    <property type="project" value="SynGO"/>
</dbReference>
<dbReference type="GO" id="GO:0048278">
    <property type="term" value="P:vesicle docking"/>
    <property type="evidence" value="ECO:0000318"/>
    <property type="project" value="GO_Central"/>
</dbReference>
<dbReference type="GO" id="GO:0006906">
    <property type="term" value="P:vesicle fusion"/>
    <property type="evidence" value="ECO:0000266"/>
    <property type="project" value="RGD"/>
</dbReference>
<dbReference type="GO" id="GO:0016192">
    <property type="term" value="P:vesicle-mediated transport"/>
    <property type="evidence" value="ECO:0000314"/>
    <property type="project" value="RGD"/>
</dbReference>
<dbReference type="CDD" id="cd21447">
    <property type="entry name" value="SNARE_NTD_STX6"/>
    <property type="match status" value="1"/>
</dbReference>
<dbReference type="CDD" id="cd15851">
    <property type="entry name" value="SNARE_Syntaxin6"/>
    <property type="match status" value="1"/>
</dbReference>
<dbReference type="FunFam" id="1.20.5.110:FF:000006">
    <property type="entry name" value="Syntaxin 6"/>
    <property type="match status" value="1"/>
</dbReference>
<dbReference type="FunFam" id="1.20.58.90:FF:000002">
    <property type="entry name" value="syntaxin-6 isoform X1"/>
    <property type="match status" value="1"/>
</dbReference>
<dbReference type="Gene3D" id="1.20.5.110">
    <property type="match status" value="1"/>
</dbReference>
<dbReference type="Gene3D" id="1.20.58.90">
    <property type="match status" value="1"/>
</dbReference>
<dbReference type="InterPro" id="IPR010989">
    <property type="entry name" value="SNARE"/>
</dbReference>
<dbReference type="InterPro" id="IPR015260">
    <property type="entry name" value="Syntaxin-6/10/61_N"/>
</dbReference>
<dbReference type="InterPro" id="IPR006012">
    <property type="entry name" value="Syntaxin/epimorphin_CS"/>
</dbReference>
<dbReference type="InterPro" id="IPR000727">
    <property type="entry name" value="T_SNARE_dom"/>
</dbReference>
<dbReference type="PANTHER" id="PTHR12791">
    <property type="entry name" value="GOLGI SNARE BET1-RELATED"/>
    <property type="match status" value="1"/>
</dbReference>
<dbReference type="Pfam" id="PF05739">
    <property type="entry name" value="SNARE"/>
    <property type="match status" value="1"/>
</dbReference>
<dbReference type="Pfam" id="PF09177">
    <property type="entry name" value="STX6_10_61_N"/>
    <property type="match status" value="1"/>
</dbReference>
<dbReference type="SMART" id="SM00397">
    <property type="entry name" value="t_SNARE"/>
    <property type="match status" value="1"/>
</dbReference>
<dbReference type="SUPFAM" id="SSF58038">
    <property type="entry name" value="SNARE fusion complex"/>
    <property type="match status" value="1"/>
</dbReference>
<dbReference type="SUPFAM" id="SSF47661">
    <property type="entry name" value="t-snare proteins"/>
    <property type="match status" value="1"/>
</dbReference>
<dbReference type="PROSITE" id="PS00914">
    <property type="entry name" value="SYNTAXIN"/>
    <property type="match status" value="1"/>
</dbReference>
<dbReference type="PROSITE" id="PS50192">
    <property type="entry name" value="T_SNARE"/>
    <property type="match status" value="1"/>
</dbReference>
<evidence type="ECO:0000250" key="1">
    <source>
        <dbReference type="UniProtKB" id="O43752"/>
    </source>
</evidence>
<evidence type="ECO:0000250" key="2">
    <source>
        <dbReference type="UniProtKB" id="Q9JKK1"/>
    </source>
</evidence>
<evidence type="ECO:0000255" key="3"/>
<evidence type="ECO:0000255" key="4">
    <source>
        <dbReference type="PROSITE-ProRule" id="PRU00202"/>
    </source>
</evidence>
<evidence type="ECO:0000269" key="5">
    <source>
    </source>
</evidence>
<evidence type="ECO:0000269" key="6">
    <source>
    </source>
</evidence>
<evidence type="ECO:0000269" key="7">
    <source>
    </source>
</evidence>
<evidence type="ECO:0000269" key="8">
    <source>
    </source>
</evidence>
<evidence type="ECO:0000269" key="9">
    <source>
    </source>
</evidence>
<evidence type="ECO:0000305" key="10"/>
<evidence type="ECO:0007744" key="11">
    <source>
    </source>
</evidence>
<evidence type="ECO:0007829" key="12">
    <source>
        <dbReference type="PDB" id="1LVF"/>
    </source>
</evidence>
<accession>Q63635</accession>
<comment type="function">
    <text evidence="9">SNARE promoting movement of transport vesicles to target membranes (PubMed:30962439). Targets endosomes to the trans-Golgi network, and may therefore function in retrograde trafficking (PubMed:30962439). Together with SNARE STX12, promotes movement of vesicles from endosomes to the cell membrane, and may therefore function in the endocytic recycling pathway (PubMed:30962439).</text>
</comment>
<comment type="subunit">
    <text evidence="1 2 5 6 7 8">Identified in a complex containing STX6, STX12, VAMP4 and VTI1A (By similarity). Binds EEA1 (PubMed:10506127). Interacts with VPS45A and GOPC (By similarity). Interacts with MARCHF2; the interaction promotes MARCHF2-mediated ubiquitination and degradation of CFTR (PubMed:15689499). Interacts with MARCHF3 (PubMed:16428329). Interacts with BLTP3B (via C-terminal coiled-coil domain) (PubMed:20163565). Interacts with BAIAP3; this interaction is increased in the presence of calcium (By similarity). Interacts (via N-terminus) with VPS51 (PubMed:30962439). Interacts with VPS13B (PubMed:30962439).</text>
</comment>
<comment type="interaction">
    <interactant intactId="EBI-398854">
        <id>Q63635</id>
    </interactant>
    <interactant intactId="EBI-298113">
        <id>Q15075</id>
        <label>EEA1</label>
    </interactant>
    <organismsDiffer>true</organismsDiffer>
    <experiments>4</experiments>
</comment>
<comment type="subcellular location">
    <subcellularLocation>
        <location evidence="1">Golgi apparatus membrane</location>
        <topology evidence="10">Single-pass type IV membrane protein</topology>
    </subcellularLocation>
    <subcellularLocation>
        <location evidence="9">Golgi apparatus</location>
        <location evidence="9">trans-Golgi network membrane</location>
        <topology evidence="3">Single-pass type IV membrane protein</topology>
    </subcellularLocation>
    <subcellularLocation>
        <location evidence="9">Recycling endosome membrane</location>
        <topology evidence="3">Single-pass type IV membrane protein</topology>
    </subcellularLocation>
</comment>
<comment type="tissue specificity">
    <text>Widely expressed, with relatively higher expression in brain, lung and kidney.</text>
</comment>
<comment type="similarity">
    <text evidence="10">Belongs to the syntaxin family.</text>
</comment>
<feature type="initiator methionine" description="Removed" evidence="1">
    <location>
        <position position="1"/>
    </location>
</feature>
<feature type="chain" id="PRO_0000210211" description="Syntaxin-6">
    <location>
        <begin position="2"/>
        <end position="255"/>
    </location>
</feature>
<feature type="topological domain" description="Cytoplasmic" evidence="3">
    <location>
        <begin position="2"/>
        <end position="234"/>
    </location>
</feature>
<feature type="transmembrane region" description="Helical; Anchor for type IV membrane protein" evidence="3">
    <location>
        <begin position="235"/>
        <end position="255"/>
    </location>
</feature>
<feature type="domain" description="t-SNARE coiled-coil homology" evidence="4">
    <location>
        <begin position="163"/>
        <end position="225"/>
    </location>
</feature>
<feature type="region of interest" description="Required for interaction with VPS51" evidence="9">
    <location>
        <begin position="2"/>
        <end position="168"/>
    </location>
</feature>
<feature type="region of interest" description="Interaction with BLTP3B" evidence="8">
    <location>
        <begin position="2"/>
        <end position="112"/>
    </location>
</feature>
<feature type="coiled-coil region" evidence="3">
    <location>
        <begin position="41"/>
        <end position="74"/>
    </location>
</feature>
<feature type="modified residue" description="N-acetylserine" evidence="1">
    <location>
        <position position="2"/>
    </location>
</feature>
<feature type="modified residue" description="Phosphoserine" evidence="11">
    <location>
        <position position="2"/>
    </location>
</feature>
<feature type="modified residue" description="Phosphoserine" evidence="1">
    <location>
        <position position="129"/>
    </location>
</feature>
<feature type="modified residue" description="Phosphoserine" evidence="1">
    <location>
        <position position="152"/>
    </location>
</feature>
<feature type="helix" evidence="12">
    <location>
        <begin position="6"/>
        <end position="31"/>
    </location>
</feature>
<feature type="helix" evidence="12">
    <location>
        <begin position="40"/>
        <end position="72"/>
    </location>
</feature>
<feature type="helix" evidence="12">
    <location>
        <begin position="75"/>
        <end position="78"/>
    </location>
</feature>
<feature type="helix" evidence="12">
    <location>
        <begin position="82"/>
        <end position="108"/>
    </location>
</feature>
<organism>
    <name type="scientific">Rattus norvegicus</name>
    <name type="common">Rat</name>
    <dbReference type="NCBI Taxonomy" id="10116"/>
    <lineage>
        <taxon>Eukaryota</taxon>
        <taxon>Metazoa</taxon>
        <taxon>Chordata</taxon>
        <taxon>Craniata</taxon>
        <taxon>Vertebrata</taxon>
        <taxon>Euteleostomi</taxon>
        <taxon>Mammalia</taxon>
        <taxon>Eutheria</taxon>
        <taxon>Euarchontoglires</taxon>
        <taxon>Glires</taxon>
        <taxon>Rodentia</taxon>
        <taxon>Myomorpha</taxon>
        <taxon>Muroidea</taxon>
        <taxon>Muridae</taxon>
        <taxon>Murinae</taxon>
        <taxon>Rattus</taxon>
    </lineage>
</organism>